<proteinExistence type="evidence at protein level"/>
<reference key="1">
    <citation type="journal article" date="2002" name="Lancet">
        <title>Genome and virulence determinants of high virulence community-acquired MRSA.</title>
        <authorList>
            <person name="Baba T."/>
            <person name="Takeuchi F."/>
            <person name="Kuroda M."/>
            <person name="Yuzawa H."/>
            <person name="Aoki K."/>
            <person name="Oguchi A."/>
            <person name="Nagai Y."/>
            <person name="Iwama N."/>
            <person name="Asano K."/>
            <person name="Naimi T."/>
            <person name="Kuroda H."/>
            <person name="Cui L."/>
            <person name="Yamamoto K."/>
            <person name="Hiramatsu K."/>
        </authorList>
    </citation>
    <scope>NUCLEOTIDE SEQUENCE [LARGE SCALE GENOMIC DNA]</scope>
    <source>
        <strain>MW2</strain>
    </source>
</reference>
<evidence type="ECO:0000255" key="1">
    <source>
        <dbReference type="HAMAP-Rule" id="MF_00502"/>
    </source>
</evidence>
<evidence type="ECO:0000305" key="2"/>
<name>RL31B_STAAW</name>
<dbReference type="EMBL" id="BA000033">
    <property type="protein sequence ID" value="BAB95909.1"/>
    <property type="molecule type" value="Genomic_DNA"/>
</dbReference>
<dbReference type="RefSeq" id="WP_000808968.1">
    <property type="nucleotide sequence ID" value="NC_003923.1"/>
</dbReference>
<dbReference type="PDB" id="8Y36">
    <property type="method" value="EM"/>
    <property type="resolution" value="2.65 A"/>
    <property type="chains" value="Y=1-59"/>
</dbReference>
<dbReference type="PDB" id="8Y37">
    <property type="method" value="EM"/>
    <property type="resolution" value="2.53 A"/>
    <property type="chains" value="Y=1-59"/>
</dbReference>
<dbReference type="PDB" id="8Y38">
    <property type="method" value="EM"/>
    <property type="resolution" value="2.58 A"/>
    <property type="chains" value="Y=1-59"/>
</dbReference>
<dbReference type="PDB" id="8Y39">
    <property type="method" value="EM"/>
    <property type="resolution" value="3.60 A"/>
    <property type="chains" value="Y=1-59"/>
</dbReference>
<dbReference type="PDBsum" id="8Y36"/>
<dbReference type="PDBsum" id="8Y37"/>
<dbReference type="PDBsum" id="8Y38"/>
<dbReference type="PDBsum" id="8Y39"/>
<dbReference type="EMDB" id="EMD-38873"/>
<dbReference type="EMDB" id="EMD-38874"/>
<dbReference type="EMDB" id="EMD-38875"/>
<dbReference type="EMDB" id="EMD-38876"/>
<dbReference type="SMR" id="P66197"/>
<dbReference type="KEGG" id="sam:MW2044"/>
<dbReference type="HOGENOM" id="CLU_114306_2_2_9"/>
<dbReference type="GO" id="GO:1990904">
    <property type="term" value="C:ribonucleoprotein complex"/>
    <property type="evidence" value="ECO:0007669"/>
    <property type="project" value="UniProtKB-KW"/>
</dbReference>
<dbReference type="GO" id="GO:0005840">
    <property type="term" value="C:ribosome"/>
    <property type="evidence" value="ECO:0007669"/>
    <property type="project" value="UniProtKB-KW"/>
</dbReference>
<dbReference type="GO" id="GO:0003735">
    <property type="term" value="F:structural constituent of ribosome"/>
    <property type="evidence" value="ECO:0007669"/>
    <property type="project" value="InterPro"/>
</dbReference>
<dbReference type="GO" id="GO:0006412">
    <property type="term" value="P:translation"/>
    <property type="evidence" value="ECO:0007669"/>
    <property type="project" value="UniProtKB-UniRule"/>
</dbReference>
<dbReference type="Gene3D" id="4.10.830.30">
    <property type="entry name" value="Ribosomal protein L31"/>
    <property type="match status" value="1"/>
</dbReference>
<dbReference type="HAMAP" id="MF_00502">
    <property type="entry name" value="Ribosomal_bL31_2"/>
    <property type="match status" value="1"/>
</dbReference>
<dbReference type="InterPro" id="IPR034704">
    <property type="entry name" value="Ribosomal_bL28/bL31-like_sf"/>
</dbReference>
<dbReference type="InterPro" id="IPR002150">
    <property type="entry name" value="Ribosomal_bL31"/>
</dbReference>
<dbReference type="InterPro" id="IPR027493">
    <property type="entry name" value="Ribosomal_bL31_B"/>
</dbReference>
<dbReference type="InterPro" id="IPR042105">
    <property type="entry name" value="Ribosomal_bL31_sf"/>
</dbReference>
<dbReference type="NCBIfam" id="TIGR00105">
    <property type="entry name" value="L31"/>
    <property type="match status" value="1"/>
</dbReference>
<dbReference type="NCBIfam" id="NF002462">
    <property type="entry name" value="PRK01678.1"/>
    <property type="match status" value="1"/>
</dbReference>
<dbReference type="PANTHER" id="PTHR33280">
    <property type="entry name" value="50S RIBOSOMAL PROTEIN L31, CHLOROPLASTIC"/>
    <property type="match status" value="1"/>
</dbReference>
<dbReference type="PANTHER" id="PTHR33280:SF1">
    <property type="entry name" value="LARGE RIBOSOMAL SUBUNIT PROTEIN BL31C"/>
    <property type="match status" value="1"/>
</dbReference>
<dbReference type="Pfam" id="PF01197">
    <property type="entry name" value="Ribosomal_L31"/>
    <property type="match status" value="1"/>
</dbReference>
<dbReference type="PRINTS" id="PR01249">
    <property type="entry name" value="RIBOSOMALL31"/>
</dbReference>
<dbReference type="SUPFAM" id="SSF143800">
    <property type="entry name" value="L28p-like"/>
    <property type="match status" value="1"/>
</dbReference>
<dbReference type="PROSITE" id="PS01143">
    <property type="entry name" value="RIBOSOMAL_L31"/>
    <property type="match status" value="1"/>
</dbReference>
<keyword id="KW-0002">3D-structure</keyword>
<keyword id="KW-0687">Ribonucleoprotein</keyword>
<keyword id="KW-0689">Ribosomal protein</keyword>
<protein>
    <recommendedName>
        <fullName evidence="1">Large ribosomal subunit protein bL31B</fullName>
    </recommendedName>
    <alternativeName>
        <fullName evidence="2">50S ribosomal protein L31 type B</fullName>
    </alternativeName>
</protein>
<comment type="subunit">
    <text evidence="1">Part of the 50S ribosomal subunit.</text>
</comment>
<comment type="similarity">
    <text evidence="1">Belongs to the bacterial ribosomal protein bL31 family. Type B subfamily.</text>
</comment>
<accession>P66197</accession>
<accession>Q99SD8</accession>
<gene>
    <name evidence="1" type="primary">rpmE2</name>
    <name type="synonym">rpmE</name>
    <name type="ordered locus">MW2044</name>
</gene>
<organism>
    <name type="scientific">Staphylococcus aureus (strain MW2)</name>
    <dbReference type="NCBI Taxonomy" id="196620"/>
    <lineage>
        <taxon>Bacteria</taxon>
        <taxon>Bacillati</taxon>
        <taxon>Bacillota</taxon>
        <taxon>Bacilli</taxon>
        <taxon>Bacillales</taxon>
        <taxon>Staphylococcaceae</taxon>
        <taxon>Staphylococcus</taxon>
    </lineage>
</organism>
<sequence>MKQGIHPEYHQVIFLDTTTNFKFLSGSTKTSSEMMEWEDGKEYPVIRLDISSDSHPFYTGRQKFAAADGRVERFNKKFGLKSNN</sequence>
<feature type="chain" id="PRO_0000173260" description="Large ribosomal subunit protein bL31B">
    <location>
        <begin position="1"/>
        <end position="84"/>
    </location>
</feature>